<evidence type="ECO:0000255" key="1">
    <source>
        <dbReference type="HAMAP-Rule" id="MF_01174"/>
    </source>
</evidence>
<protein>
    <recommendedName>
        <fullName evidence="1">N-succinylglutamate 5-semialdehyde dehydrogenase</fullName>
        <ecNumber evidence="1">1.2.1.71</ecNumber>
    </recommendedName>
    <alternativeName>
        <fullName evidence="1">Succinylglutamic semialdehyde dehydrogenase</fullName>
        <shortName evidence="1">SGSD</shortName>
    </alternativeName>
</protein>
<name>ASTD_ECTM1</name>
<reference key="1">
    <citation type="submission" date="2007-04" db="EMBL/GenBank/DDBJ databases">
        <title>Complete sequence of Pseudomonas mendocina ymp.</title>
        <authorList>
            <consortium name="US DOE Joint Genome Institute"/>
            <person name="Copeland A."/>
            <person name="Lucas S."/>
            <person name="Lapidus A."/>
            <person name="Barry K."/>
            <person name="Glavina del Rio T."/>
            <person name="Dalin E."/>
            <person name="Tice H."/>
            <person name="Pitluck S."/>
            <person name="Kiss H."/>
            <person name="Brettin T."/>
            <person name="Detter J.C."/>
            <person name="Bruce D."/>
            <person name="Han C."/>
            <person name="Schmutz J."/>
            <person name="Larimer F."/>
            <person name="Land M."/>
            <person name="Hauser L."/>
            <person name="Kyrpides N."/>
            <person name="Mikhailova N."/>
            <person name="Hersman L."/>
            <person name="Dubois J."/>
            <person name="Maurice P."/>
            <person name="Richardson P."/>
        </authorList>
    </citation>
    <scope>NUCLEOTIDE SEQUENCE [LARGE SCALE GENOMIC DNA]</scope>
    <source>
        <strain>ymp</strain>
    </source>
</reference>
<accession>A4XWE7</accession>
<proteinExistence type="inferred from homology"/>
<feature type="chain" id="PRO_1000065761" description="N-succinylglutamate 5-semialdehyde dehydrogenase">
    <location>
        <begin position="1"/>
        <end position="487"/>
    </location>
</feature>
<feature type="active site" evidence="1">
    <location>
        <position position="244"/>
    </location>
</feature>
<feature type="active site" evidence="1">
    <location>
        <position position="278"/>
    </location>
</feature>
<feature type="binding site" evidence="1">
    <location>
        <begin position="221"/>
        <end position="226"/>
    </location>
    <ligand>
        <name>NAD(+)</name>
        <dbReference type="ChEBI" id="CHEBI:57540"/>
    </ligand>
</feature>
<comment type="function">
    <text evidence="1">Catalyzes the NAD-dependent reduction of succinylglutamate semialdehyde into succinylglutamate.</text>
</comment>
<comment type="catalytic activity">
    <reaction evidence="1">
        <text>N-succinyl-L-glutamate 5-semialdehyde + NAD(+) + H2O = N-succinyl-L-glutamate + NADH + 2 H(+)</text>
        <dbReference type="Rhea" id="RHEA:10812"/>
        <dbReference type="ChEBI" id="CHEBI:15377"/>
        <dbReference type="ChEBI" id="CHEBI:15378"/>
        <dbReference type="ChEBI" id="CHEBI:57540"/>
        <dbReference type="ChEBI" id="CHEBI:57945"/>
        <dbReference type="ChEBI" id="CHEBI:58520"/>
        <dbReference type="ChEBI" id="CHEBI:58763"/>
        <dbReference type="EC" id="1.2.1.71"/>
    </reaction>
</comment>
<comment type="pathway">
    <text evidence="1">Amino-acid degradation; L-arginine degradation via AST pathway; L-glutamate and succinate from L-arginine: step 4/5.</text>
</comment>
<comment type="similarity">
    <text evidence="1">Belongs to the aldehyde dehydrogenase family. AstD subfamily.</text>
</comment>
<keyword id="KW-0056">Arginine metabolism</keyword>
<keyword id="KW-0520">NAD</keyword>
<keyword id="KW-0560">Oxidoreductase</keyword>
<sequence length="487" mass="51087">MSTHYIAGQWRPGQGAPLQSLDPVSQAVVWQGQGASAAQVDEAVNAARGAFSLWAAHSLDGRIAVLERFAAALKSHADELARAIGEETGKPLWEAATEVTSMVNKVAISIQSYRERTGEKSGPLADATAVLRHKPHGVVAVFGPYNFPGHLPNGHIVPALLAGNCVLFKPSELTPKVAELTVKCWIEAGLPAGVLNLLQGGRETGVALAGHPGIDGLFFTGSSRTGNLLHAQFAGRPDKILALEMGGNNPLIVDQVADIDAAVYTIVQSAFISAGQRCTCARRLLVPQGQWGDALLARLVQVAGQLKVGRFDEQPAPFMGSVISLQAAAQLMQAQADLLAKGATALLAMTQPQADAALLTPGILDVTAVSERPDEEFFGPLLQVIRYSDFDGAIAEANTTAFGLAAGLLSDSKARYEQFWLHSRAGIVNWNKQLTGAASTAPFGGIGASGNHRASAYYAADYCAYPVASLESEALTLPTTLTPGVTL</sequence>
<gene>
    <name evidence="1" type="primary">astD</name>
    <name type="ordered locus">Pmen_2908</name>
</gene>
<dbReference type="EC" id="1.2.1.71" evidence="1"/>
<dbReference type="EMBL" id="CP000680">
    <property type="protein sequence ID" value="ABP85663.1"/>
    <property type="molecule type" value="Genomic_DNA"/>
</dbReference>
<dbReference type="SMR" id="A4XWE7"/>
<dbReference type="STRING" id="399739.Pmen_2908"/>
<dbReference type="KEGG" id="pmy:Pmen_2908"/>
<dbReference type="PATRIC" id="fig|399739.8.peg.2947"/>
<dbReference type="eggNOG" id="COG1012">
    <property type="taxonomic scope" value="Bacteria"/>
</dbReference>
<dbReference type="HOGENOM" id="CLU_005391_1_0_6"/>
<dbReference type="OrthoDB" id="9812625at2"/>
<dbReference type="UniPathway" id="UPA00185">
    <property type="reaction ID" value="UER00282"/>
</dbReference>
<dbReference type="GO" id="GO:0043824">
    <property type="term" value="F:succinylglutamate-semialdehyde dehydrogenase activity"/>
    <property type="evidence" value="ECO:0007669"/>
    <property type="project" value="UniProtKB-EC"/>
</dbReference>
<dbReference type="GO" id="GO:0019544">
    <property type="term" value="P:arginine catabolic process to glutamate"/>
    <property type="evidence" value="ECO:0007669"/>
    <property type="project" value="UniProtKB-UniRule"/>
</dbReference>
<dbReference type="GO" id="GO:0019545">
    <property type="term" value="P:arginine catabolic process to succinate"/>
    <property type="evidence" value="ECO:0007669"/>
    <property type="project" value="UniProtKB-UniRule"/>
</dbReference>
<dbReference type="CDD" id="cd07095">
    <property type="entry name" value="ALDH_SGSD_AstD"/>
    <property type="match status" value="1"/>
</dbReference>
<dbReference type="FunFam" id="3.40.309.10:FF:000013">
    <property type="entry name" value="N-succinylglutamate 5-semialdehyde dehydrogenase"/>
    <property type="match status" value="1"/>
</dbReference>
<dbReference type="FunFam" id="3.40.605.10:FF:000010">
    <property type="entry name" value="N-succinylglutamate 5-semialdehyde dehydrogenase"/>
    <property type="match status" value="1"/>
</dbReference>
<dbReference type="Gene3D" id="3.40.605.10">
    <property type="entry name" value="Aldehyde Dehydrogenase, Chain A, domain 1"/>
    <property type="match status" value="1"/>
</dbReference>
<dbReference type="Gene3D" id="3.40.309.10">
    <property type="entry name" value="Aldehyde Dehydrogenase, Chain A, domain 2"/>
    <property type="match status" value="1"/>
</dbReference>
<dbReference type="HAMAP" id="MF_01174">
    <property type="entry name" value="Aldedh_AstD"/>
    <property type="match status" value="1"/>
</dbReference>
<dbReference type="InterPro" id="IPR016161">
    <property type="entry name" value="Ald_DH/histidinol_DH"/>
</dbReference>
<dbReference type="InterPro" id="IPR016163">
    <property type="entry name" value="Ald_DH_C"/>
</dbReference>
<dbReference type="InterPro" id="IPR016160">
    <property type="entry name" value="Ald_DH_CS_CYS"/>
</dbReference>
<dbReference type="InterPro" id="IPR029510">
    <property type="entry name" value="Ald_DH_CS_GLU"/>
</dbReference>
<dbReference type="InterPro" id="IPR016162">
    <property type="entry name" value="Ald_DH_N"/>
</dbReference>
<dbReference type="InterPro" id="IPR015590">
    <property type="entry name" value="Aldehyde_DH_dom"/>
</dbReference>
<dbReference type="InterPro" id="IPR017649">
    <property type="entry name" value="SuccinylGlu_semiald_DH_AstD"/>
</dbReference>
<dbReference type="NCBIfam" id="TIGR03240">
    <property type="entry name" value="arg_catab_astD"/>
    <property type="match status" value="1"/>
</dbReference>
<dbReference type="NCBIfam" id="NF006992">
    <property type="entry name" value="PRK09457.1"/>
    <property type="match status" value="1"/>
</dbReference>
<dbReference type="PANTHER" id="PTHR11699">
    <property type="entry name" value="ALDEHYDE DEHYDROGENASE-RELATED"/>
    <property type="match status" value="1"/>
</dbReference>
<dbReference type="Pfam" id="PF00171">
    <property type="entry name" value="Aldedh"/>
    <property type="match status" value="1"/>
</dbReference>
<dbReference type="SUPFAM" id="SSF53720">
    <property type="entry name" value="ALDH-like"/>
    <property type="match status" value="1"/>
</dbReference>
<dbReference type="PROSITE" id="PS00070">
    <property type="entry name" value="ALDEHYDE_DEHYDR_CYS"/>
    <property type="match status" value="1"/>
</dbReference>
<dbReference type="PROSITE" id="PS00687">
    <property type="entry name" value="ALDEHYDE_DEHYDR_GLU"/>
    <property type="match status" value="1"/>
</dbReference>
<organism>
    <name type="scientific">Ectopseudomonas mendocina (strain ymp)</name>
    <name type="common">Pseudomonas mendocina</name>
    <dbReference type="NCBI Taxonomy" id="399739"/>
    <lineage>
        <taxon>Bacteria</taxon>
        <taxon>Pseudomonadati</taxon>
        <taxon>Pseudomonadota</taxon>
        <taxon>Gammaproteobacteria</taxon>
        <taxon>Pseudomonadales</taxon>
        <taxon>Pseudomonadaceae</taxon>
        <taxon>Ectopseudomonas</taxon>
    </lineage>
</organism>